<gene>
    <name evidence="1" type="primary">glpE</name>
    <name type="ordered locus">c4202</name>
</gene>
<organism>
    <name type="scientific">Escherichia coli O6:H1 (strain CFT073 / ATCC 700928 / UPEC)</name>
    <dbReference type="NCBI Taxonomy" id="199310"/>
    <lineage>
        <taxon>Bacteria</taxon>
        <taxon>Pseudomonadati</taxon>
        <taxon>Pseudomonadota</taxon>
        <taxon>Gammaproteobacteria</taxon>
        <taxon>Enterobacterales</taxon>
        <taxon>Enterobacteriaceae</taxon>
        <taxon>Escherichia</taxon>
    </lineage>
</organism>
<reference key="1">
    <citation type="journal article" date="2002" name="Proc. Natl. Acad. Sci. U.S.A.">
        <title>Extensive mosaic structure revealed by the complete genome sequence of uropathogenic Escherichia coli.</title>
        <authorList>
            <person name="Welch R.A."/>
            <person name="Burland V."/>
            <person name="Plunkett G. III"/>
            <person name="Redford P."/>
            <person name="Roesch P."/>
            <person name="Rasko D."/>
            <person name="Buckles E.L."/>
            <person name="Liou S.-R."/>
            <person name="Boutin A."/>
            <person name="Hackett J."/>
            <person name="Stroud D."/>
            <person name="Mayhew G.F."/>
            <person name="Rose D.J."/>
            <person name="Zhou S."/>
            <person name="Schwartz D.C."/>
            <person name="Perna N.T."/>
            <person name="Mobley H.L.T."/>
            <person name="Donnenberg M.S."/>
            <person name="Blattner F.R."/>
        </authorList>
    </citation>
    <scope>NUCLEOTIDE SEQUENCE [LARGE SCALE GENOMIC DNA]</scope>
    <source>
        <strain>CFT073 / ATCC 700928 / UPEC</strain>
    </source>
</reference>
<feature type="chain" id="PRO_0000200550" description="Thiosulfate sulfurtransferase GlpE">
    <location>
        <begin position="1"/>
        <end position="108"/>
    </location>
</feature>
<feature type="domain" description="Rhodanese" evidence="1">
    <location>
        <begin position="17"/>
        <end position="105"/>
    </location>
</feature>
<feature type="active site" description="Cysteine persulfide intermediate" evidence="1">
    <location>
        <position position="65"/>
    </location>
</feature>
<keyword id="KW-0963">Cytoplasm</keyword>
<keyword id="KW-1185">Reference proteome</keyword>
<keyword id="KW-0808">Transferase</keyword>
<protein>
    <recommendedName>
        <fullName evidence="1">Thiosulfate sulfurtransferase GlpE</fullName>
        <ecNumber evidence="1">2.8.1.1</ecNumber>
    </recommendedName>
</protein>
<proteinExistence type="inferred from homology"/>
<comment type="function">
    <text evidence="1">Transferase that catalyzes the transfer of sulfur from thiosulfate to thiophilic acceptors such as cyanide or dithiols. May function in a CysM-independent thiosulfate assimilation pathway by catalyzing the conversion of thiosulfate to sulfite, which can then be used for L-cysteine biosynthesis.</text>
</comment>
<comment type="catalytic activity">
    <reaction evidence="1">
        <text>thiosulfate + hydrogen cyanide = thiocyanate + sulfite + 2 H(+)</text>
        <dbReference type="Rhea" id="RHEA:16881"/>
        <dbReference type="ChEBI" id="CHEBI:15378"/>
        <dbReference type="ChEBI" id="CHEBI:17359"/>
        <dbReference type="ChEBI" id="CHEBI:18022"/>
        <dbReference type="ChEBI" id="CHEBI:18407"/>
        <dbReference type="ChEBI" id="CHEBI:33542"/>
        <dbReference type="EC" id="2.8.1.1"/>
    </reaction>
</comment>
<comment type="catalytic activity">
    <reaction evidence="1">
        <text>thiosulfate + [thioredoxin]-dithiol = [thioredoxin]-disulfide + hydrogen sulfide + sulfite + 2 H(+)</text>
        <dbReference type="Rhea" id="RHEA:83859"/>
        <dbReference type="Rhea" id="RHEA-COMP:10698"/>
        <dbReference type="Rhea" id="RHEA-COMP:10700"/>
        <dbReference type="ChEBI" id="CHEBI:15378"/>
        <dbReference type="ChEBI" id="CHEBI:17359"/>
        <dbReference type="ChEBI" id="CHEBI:29919"/>
        <dbReference type="ChEBI" id="CHEBI:29950"/>
        <dbReference type="ChEBI" id="CHEBI:33542"/>
        <dbReference type="ChEBI" id="CHEBI:50058"/>
    </reaction>
</comment>
<comment type="subcellular location">
    <subcellularLocation>
        <location evidence="1">Cytoplasm</location>
    </subcellularLocation>
</comment>
<comment type="similarity">
    <text evidence="1">Belongs to the GlpE family.</text>
</comment>
<comment type="sequence caution" evidence="2">
    <conflict type="erroneous initiation">
        <sequence resource="EMBL-CDS" id="AAN82640"/>
    </conflict>
</comment>
<name>GLPE_ECOL6</name>
<sequence>MDQFECINVADAHQKLQEKEAVLVDIRDPQSFAMGHAVQAFHLTNDTLGAFMRDNDFDTPVMVMCYHGNSSKGAAQYLLQQGYDVVYSIDGGFEAWQRQFPAEVAYGA</sequence>
<dbReference type="EC" id="2.8.1.1" evidence="1"/>
<dbReference type="EMBL" id="AE014075">
    <property type="protein sequence ID" value="AAN82640.1"/>
    <property type="status" value="ALT_INIT"/>
    <property type="molecule type" value="Genomic_DNA"/>
</dbReference>
<dbReference type="RefSeq" id="WP_000371928.1">
    <property type="nucleotide sequence ID" value="NZ_CP051263.1"/>
</dbReference>
<dbReference type="SMR" id="P0A6V6"/>
<dbReference type="STRING" id="199310.c4202"/>
<dbReference type="GeneID" id="93778571"/>
<dbReference type="KEGG" id="ecc:c4202"/>
<dbReference type="eggNOG" id="COG0607">
    <property type="taxonomic scope" value="Bacteria"/>
</dbReference>
<dbReference type="HOGENOM" id="CLU_089574_14_0_6"/>
<dbReference type="Proteomes" id="UP000001410">
    <property type="component" value="Chromosome"/>
</dbReference>
<dbReference type="GO" id="GO:0005737">
    <property type="term" value="C:cytoplasm"/>
    <property type="evidence" value="ECO:0007669"/>
    <property type="project" value="UniProtKB-SubCell"/>
</dbReference>
<dbReference type="GO" id="GO:0004792">
    <property type="term" value="F:thiosulfate-cyanide sulfurtransferase activity"/>
    <property type="evidence" value="ECO:0007669"/>
    <property type="project" value="UniProtKB-UniRule"/>
</dbReference>
<dbReference type="GO" id="GO:0006071">
    <property type="term" value="P:glycerol metabolic process"/>
    <property type="evidence" value="ECO:0007669"/>
    <property type="project" value="UniProtKB-UniRule"/>
</dbReference>
<dbReference type="CDD" id="cd01444">
    <property type="entry name" value="GlpE_ST"/>
    <property type="match status" value="1"/>
</dbReference>
<dbReference type="FunFam" id="3.40.250.10:FF:000007">
    <property type="entry name" value="Thiosulfate sulfurtransferase GlpE"/>
    <property type="match status" value="1"/>
</dbReference>
<dbReference type="Gene3D" id="3.40.250.10">
    <property type="entry name" value="Rhodanese-like domain"/>
    <property type="match status" value="1"/>
</dbReference>
<dbReference type="HAMAP" id="MF_01009">
    <property type="entry name" value="Thiosulf_sulfurtr"/>
    <property type="match status" value="1"/>
</dbReference>
<dbReference type="InterPro" id="IPR050229">
    <property type="entry name" value="GlpE_sulfurtransferase"/>
</dbReference>
<dbReference type="InterPro" id="IPR001763">
    <property type="entry name" value="Rhodanese-like_dom"/>
</dbReference>
<dbReference type="InterPro" id="IPR036873">
    <property type="entry name" value="Rhodanese-like_dom_sf"/>
</dbReference>
<dbReference type="InterPro" id="IPR023695">
    <property type="entry name" value="Thiosulf_sulfurTrfase"/>
</dbReference>
<dbReference type="NCBIfam" id="NF001195">
    <property type="entry name" value="PRK00162.1"/>
    <property type="match status" value="1"/>
</dbReference>
<dbReference type="PANTHER" id="PTHR43031">
    <property type="entry name" value="FAD-DEPENDENT OXIDOREDUCTASE"/>
    <property type="match status" value="1"/>
</dbReference>
<dbReference type="PANTHER" id="PTHR43031:SF6">
    <property type="entry name" value="THIOSULFATE SULFURTRANSFERASE GLPE"/>
    <property type="match status" value="1"/>
</dbReference>
<dbReference type="Pfam" id="PF00581">
    <property type="entry name" value="Rhodanese"/>
    <property type="match status" value="1"/>
</dbReference>
<dbReference type="SMART" id="SM00450">
    <property type="entry name" value="RHOD"/>
    <property type="match status" value="1"/>
</dbReference>
<dbReference type="SUPFAM" id="SSF52821">
    <property type="entry name" value="Rhodanese/Cell cycle control phosphatase"/>
    <property type="match status" value="1"/>
</dbReference>
<dbReference type="PROSITE" id="PS50206">
    <property type="entry name" value="RHODANESE_3"/>
    <property type="match status" value="1"/>
</dbReference>
<evidence type="ECO:0000255" key="1">
    <source>
        <dbReference type="HAMAP-Rule" id="MF_01009"/>
    </source>
</evidence>
<evidence type="ECO:0000305" key="2"/>
<accession>P0A6V6</accession>
<accession>P09390</accession>
<accession>Q47235</accession>